<reference key="1">
    <citation type="journal article" date="2007" name="J. Bacteriol.">
        <title>The genome sequence of avian pathogenic Escherichia coli strain O1:K1:H7 shares strong similarities with human extraintestinal pathogenic E. coli genomes.</title>
        <authorList>
            <person name="Johnson T.J."/>
            <person name="Kariyawasam S."/>
            <person name="Wannemuehler Y."/>
            <person name="Mangiamele P."/>
            <person name="Johnson S.J."/>
            <person name="Doetkott C."/>
            <person name="Skyberg J.A."/>
            <person name="Lynne A.M."/>
            <person name="Johnson J.R."/>
            <person name="Nolan L.K."/>
        </authorList>
    </citation>
    <scope>NUCLEOTIDE SEQUENCE [LARGE SCALE GENOMIC DNA]</scope>
</reference>
<evidence type="ECO:0000255" key="1">
    <source>
        <dbReference type="HAMAP-Rule" id="MF_00830"/>
    </source>
</evidence>
<accession>A1A9R6</accession>
<feature type="chain" id="PRO_0000402676" description="Ureidoacrylate amidohydrolase RutB">
    <location>
        <begin position="1"/>
        <end position="244"/>
    </location>
</feature>
<feature type="active site" description="Proton acceptor" evidence="1">
    <location>
        <position position="38"/>
    </location>
</feature>
<feature type="active site" evidence="1">
    <location>
        <position position="147"/>
    </location>
</feature>
<feature type="active site" description="Nucleophile" evidence="1">
    <location>
        <position position="180"/>
    </location>
</feature>
<sequence>MPRPSPCADSGGGMMTTLTARPEAITFDPQQTALIVVDMQNAYATPGGYLDLAGFDVSTTRPVIANIQTAVTAARTAGMLIIWFQNGWDEQYVEAGGPGSPNYHKSNALKTMRNQPLLQGKLLAKGSWDYQLVDELVPQPGDIVLPKPRYSGFFNTPLDSILRSRGIRHLVFTGIATNVCVESTLRDGFFLEYFGVVLEDATHQAGPEFAQKAALFNIETFFGWVSDVETFCDALSSTSFARIA</sequence>
<protein>
    <recommendedName>
        <fullName evidence="1">Ureidoacrylate amidohydrolase RutB</fullName>
        <ecNumber evidence="1">3.5.1.110</ecNumber>
    </recommendedName>
</protein>
<name>RUTB_ECOK1</name>
<dbReference type="EC" id="3.5.1.110" evidence="1"/>
<dbReference type="EMBL" id="CP000468">
    <property type="protein sequence ID" value="ABJ00406.1"/>
    <property type="molecule type" value="Genomic_DNA"/>
</dbReference>
<dbReference type="SMR" id="A1A9R6"/>
<dbReference type="KEGG" id="ecv:APECO1_102"/>
<dbReference type="HOGENOM" id="CLU_068979_8_0_6"/>
<dbReference type="Proteomes" id="UP000008216">
    <property type="component" value="Chromosome"/>
</dbReference>
<dbReference type="GO" id="GO:0016811">
    <property type="term" value="F:hydrolase activity, acting on carbon-nitrogen (but not peptide) bonds, in linear amides"/>
    <property type="evidence" value="ECO:0007669"/>
    <property type="project" value="UniProtKB-UniRule"/>
</dbReference>
<dbReference type="GO" id="GO:0019740">
    <property type="term" value="P:nitrogen utilization"/>
    <property type="evidence" value="ECO:0007669"/>
    <property type="project" value="UniProtKB-UniRule"/>
</dbReference>
<dbReference type="GO" id="GO:0006212">
    <property type="term" value="P:uracil catabolic process"/>
    <property type="evidence" value="ECO:0007669"/>
    <property type="project" value="UniProtKB-UniRule"/>
</dbReference>
<dbReference type="CDD" id="cd00431">
    <property type="entry name" value="cysteine_hydrolases"/>
    <property type="match status" value="1"/>
</dbReference>
<dbReference type="FunFam" id="3.40.50.850:FF:000004">
    <property type="entry name" value="Peroxyureidoacrylate/ureidoacrylate amidohydrolase RutB"/>
    <property type="match status" value="1"/>
</dbReference>
<dbReference type="Gene3D" id="3.40.50.850">
    <property type="entry name" value="Isochorismatase-like"/>
    <property type="match status" value="1"/>
</dbReference>
<dbReference type="HAMAP" id="MF_00830">
    <property type="entry name" value="RutB"/>
    <property type="match status" value="1"/>
</dbReference>
<dbReference type="InterPro" id="IPR000868">
    <property type="entry name" value="Isochorismatase-like_dom"/>
</dbReference>
<dbReference type="InterPro" id="IPR050272">
    <property type="entry name" value="Isochorismatase-like_hydrls"/>
</dbReference>
<dbReference type="InterPro" id="IPR036380">
    <property type="entry name" value="Isochorismatase-like_sf"/>
</dbReference>
<dbReference type="InterPro" id="IPR019916">
    <property type="entry name" value="RutB"/>
</dbReference>
<dbReference type="NCBIfam" id="TIGR03614">
    <property type="entry name" value="RutB"/>
    <property type="match status" value="1"/>
</dbReference>
<dbReference type="PANTHER" id="PTHR43540:SF6">
    <property type="entry name" value="ISOCHORISMATASE-LIKE DOMAIN-CONTAINING PROTEIN"/>
    <property type="match status" value="1"/>
</dbReference>
<dbReference type="PANTHER" id="PTHR43540">
    <property type="entry name" value="PEROXYUREIDOACRYLATE/UREIDOACRYLATE AMIDOHYDROLASE-RELATED"/>
    <property type="match status" value="1"/>
</dbReference>
<dbReference type="Pfam" id="PF00857">
    <property type="entry name" value="Isochorismatase"/>
    <property type="match status" value="1"/>
</dbReference>
<dbReference type="SUPFAM" id="SSF52499">
    <property type="entry name" value="Isochorismatase-like hydrolases"/>
    <property type="match status" value="1"/>
</dbReference>
<comment type="function">
    <text evidence="1">Hydrolyzes ureidoacrylate to form aminoacrylate and carbamate. The carbamate hydrolyzes spontaneously, thereby releasing one of the nitrogen atoms of the pyrimidine ring as ammonia and one of its carbon atoms as CO2.</text>
</comment>
<comment type="catalytic activity">
    <reaction evidence="1">
        <text>(Z)-3-ureidoacrylate + H2O + H(+) = (Z)-3-aminoacrylate + NH4(+) + CO2</text>
        <dbReference type="Rhea" id="RHEA:42624"/>
        <dbReference type="ChEBI" id="CHEBI:15377"/>
        <dbReference type="ChEBI" id="CHEBI:15378"/>
        <dbReference type="ChEBI" id="CHEBI:16526"/>
        <dbReference type="ChEBI" id="CHEBI:28938"/>
        <dbReference type="ChEBI" id="CHEBI:59891"/>
        <dbReference type="ChEBI" id="CHEBI:59894"/>
        <dbReference type="EC" id="3.5.1.110"/>
    </reaction>
</comment>
<comment type="catalytic activity">
    <reaction evidence="1">
        <text>(Z)-3-ureidoacrylate + H2O = (Z)-3-aminoacrylate + carbamate + H(+)</text>
        <dbReference type="Rhea" id="RHEA:31603"/>
        <dbReference type="ChEBI" id="CHEBI:13941"/>
        <dbReference type="ChEBI" id="CHEBI:15377"/>
        <dbReference type="ChEBI" id="CHEBI:15378"/>
        <dbReference type="ChEBI" id="CHEBI:59891"/>
        <dbReference type="ChEBI" id="CHEBI:59894"/>
    </reaction>
</comment>
<comment type="catalytic activity">
    <reaction evidence="1">
        <text>(Z)-2-methylureidoacrylate + H2O + H(+) = (Z)-2-methylaminoacrylate + NH4(+) + CO2</text>
        <dbReference type="Rhea" id="RHEA:42620"/>
        <dbReference type="ChEBI" id="CHEBI:15377"/>
        <dbReference type="ChEBI" id="CHEBI:15378"/>
        <dbReference type="ChEBI" id="CHEBI:16526"/>
        <dbReference type="ChEBI" id="CHEBI:28938"/>
        <dbReference type="ChEBI" id="CHEBI:143783"/>
        <dbReference type="ChEBI" id="CHEBI:145735"/>
        <dbReference type="EC" id="3.5.1.110"/>
    </reaction>
</comment>
<comment type="induction">
    <text evidence="1">Up-regulated by the nitrogen regulatory protein C (NtrC also called GlnG) and repressed by RutR.</text>
</comment>
<comment type="similarity">
    <text evidence="1">Belongs to the isochorismatase family. RutB subfamily.</text>
</comment>
<gene>
    <name evidence="1" type="primary">rutB</name>
    <name type="ordered locus">Ecok1_09120</name>
    <name type="ORF">APECO1_102</name>
</gene>
<keyword id="KW-0378">Hydrolase</keyword>
<keyword id="KW-1185">Reference proteome</keyword>
<organism>
    <name type="scientific">Escherichia coli O1:K1 / APEC</name>
    <dbReference type="NCBI Taxonomy" id="405955"/>
    <lineage>
        <taxon>Bacteria</taxon>
        <taxon>Pseudomonadati</taxon>
        <taxon>Pseudomonadota</taxon>
        <taxon>Gammaproteobacteria</taxon>
        <taxon>Enterobacterales</taxon>
        <taxon>Enterobacteriaceae</taxon>
        <taxon>Escherichia</taxon>
    </lineage>
</organism>
<proteinExistence type="inferred from homology"/>